<keyword id="KW-1185">Reference proteome</keyword>
<keyword id="KW-0687">Ribonucleoprotein</keyword>
<keyword id="KW-0689">Ribosomal protein</keyword>
<keyword id="KW-0694">RNA-binding</keyword>
<keyword id="KW-0699">rRNA-binding</keyword>
<proteinExistence type="inferred from homology"/>
<feature type="chain" id="PRO_0000181602" description="Large ribosomal subunit protein bL25">
    <location>
        <begin position="1"/>
        <end position="197"/>
    </location>
</feature>
<protein>
    <recommendedName>
        <fullName evidence="1">Large ribosomal subunit protein bL25</fullName>
    </recommendedName>
    <alternativeName>
        <fullName evidence="2">50S ribosomal protein L25</fullName>
    </alternativeName>
    <alternativeName>
        <fullName evidence="1">General stress protein CTC</fullName>
    </alternativeName>
</protein>
<organism>
    <name type="scientific">Streptomyces avermitilis (strain ATCC 31267 / DSM 46492 / JCM 5070 / NBRC 14893 / NCIMB 12804 / NRRL 8165 / MA-4680)</name>
    <dbReference type="NCBI Taxonomy" id="227882"/>
    <lineage>
        <taxon>Bacteria</taxon>
        <taxon>Bacillati</taxon>
        <taxon>Actinomycetota</taxon>
        <taxon>Actinomycetes</taxon>
        <taxon>Kitasatosporales</taxon>
        <taxon>Streptomycetaceae</taxon>
        <taxon>Streptomyces</taxon>
    </lineage>
</organism>
<gene>
    <name evidence="1" type="primary">rplY</name>
    <name evidence="1" type="synonym">ctc</name>
    <name type="ordered locus">SAV_3563</name>
</gene>
<reference key="1">
    <citation type="journal article" date="2001" name="Proc. Natl. Acad. Sci. U.S.A.">
        <title>Genome sequence of an industrial microorganism Streptomyces avermitilis: deducing the ability of producing secondary metabolites.</title>
        <authorList>
            <person name="Omura S."/>
            <person name="Ikeda H."/>
            <person name="Ishikawa J."/>
            <person name="Hanamoto A."/>
            <person name="Takahashi C."/>
            <person name="Shinose M."/>
            <person name="Takahashi Y."/>
            <person name="Horikawa H."/>
            <person name="Nakazawa H."/>
            <person name="Osonoe T."/>
            <person name="Kikuchi H."/>
            <person name="Shiba T."/>
            <person name="Sakaki Y."/>
            <person name="Hattori M."/>
        </authorList>
    </citation>
    <scope>NUCLEOTIDE SEQUENCE [LARGE SCALE GENOMIC DNA]</scope>
    <source>
        <strain>ATCC 31267 / DSM 46492 / JCM 5070 / NBRC 14893 / NCIMB 12804 / NRRL 8165 / MA-4680</strain>
    </source>
</reference>
<reference key="2">
    <citation type="journal article" date="2003" name="Nat. Biotechnol.">
        <title>Complete genome sequence and comparative analysis of the industrial microorganism Streptomyces avermitilis.</title>
        <authorList>
            <person name="Ikeda H."/>
            <person name="Ishikawa J."/>
            <person name="Hanamoto A."/>
            <person name="Shinose M."/>
            <person name="Kikuchi H."/>
            <person name="Shiba T."/>
            <person name="Sakaki Y."/>
            <person name="Hattori M."/>
            <person name="Omura S."/>
        </authorList>
    </citation>
    <scope>NUCLEOTIDE SEQUENCE [LARGE SCALE GENOMIC DNA]</scope>
    <source>
        <strain>ATCC 31267 / DSM 46492 / JCM 5070 / NBRC 14893 / NCIMB 12804 / NRRL 8165 / MA-4680</strain>
    </source>
</reference>
<accession>Q82HE6</accession>
<evidence type="ECO:0000255" key="1">
    <source>
        <dbReference type="HAMAP-Rule" id="MF_01334"/>
    </source>
</evidence>
<evidence type="ECO:0000305" key="2"/>
<name>RL25_STRAW</name>
<sequence>MSEVKLAAEPRTEFGKGAARRIRRESKVPAVVYGHGAEPVHITLPGHELLLALRTPNVLLSLDIEGKAQLAIPKAVQRDAIKGFLEHVDLLLVRSGEKVNVEVYVHTEGDLAPGAYLLEHVLSTLTVEAEATHIPESVTVSIEGLEAGASILAKDIPLPSGTTLAIDEDAVVLQVLAAQAEEAAEEAAGTAEVGSEA</sequence>
<comment type="function">
    <text evidence="1">This is one of the proteins that binds to the 5S RNA in the ribosome where it forms part of the central protuberance.</text>
</comment>
<comment type="subunit">
    <text evidence="1">Part of the 50S ribosomal subunit; part of the 5S rRNA/L5/L18/L25 subcomplex. Contacts the 5S rRNA. Binds to the 5S rRNA independently of L5 and L18.</text>
</comment>
<comment type="similarity">
    <text evidence="1">Belongs to the bacterial ribosomal protein bL25 family. CTC subfamily.</text>
</comment>
<dbReference type="EMBL" id="BA000030">
    <property type="protein sequence ID" value="BAC71275.1"/>
    <property type="molecule type" value="Genomic_DNA"/>
</dbReference>
<dbReference type="RefSeq" id="WP_010984994.1">
    <property type="nucleotide sequence ID" value="NZ_JZJK01000090.1"/>
</dbReference>
<dbReference type="SMR" id="Q82HE6"/>
<dbReference type="GeneID" id="41540628"/>
<dbReference type="KEGG" id="sma:SAVERM_3563"/>
<dbReference type="eggNOG" id="COG1825">
    <property type="taxonomic scope" value="Bacteria"/>
</dbReference>
<dbReference type="HOGENOM" id="CLU_075939_1_0_11"/>
<dbReference type="OrthoDB" id="5242980at2"/>
<dbReference type="Proteomes" id="UP000000428">
    <property type="component" value="Chromosome"/>
</dbReference>
<dbReference type="GO" id="GO:0022625">
    <property type="term" value="C:cytosolic large ribosomal subunit"/>
    <property type="evidence" value="ECO:0007669"/>
    <property type="project" value="TreeGrafter"/>
</dbReference>
<dbReference type="GO" id="GO:0008097">
    <property type="term" value="F:5S rRNA binding"/>
    <property type="evidence" value="ECO:0007669"/>
    <property type="project" value="InterPro"/>
</dbReference>
<dbReference type="GO" id="GO:0003735">
    <property type="term" value="F:structural constituent of ribosome"/>
    <property type="evidence" value="ECO:0007669"/>
    <property type="project" value="InterPro"/>
</dbReference>
<dbReference type="GO" id="GO:0006412">
    <property type="term" value="P:translation"/>
    <property type="evidence" value="ECO:0007669"/>
    <property type="project" value="UniProtKB-UniRule"/>
</dbReference>
<dbReference type="CDD" id="cd00495">
    <property type="entry name" value="Ribosomal_L25_TL5_CTC"/>
    <property type="match status" value="1"/>
</dbReference>
<dbReference type="FunFam" id="2.40.240.10:FF:000010">
    <property type="entry name" value="50S ribosomal protein L25"/>
    <property type="match status" value="1"/>
</dbReference>
<dbReference type="Gene3D" id="2.170.120.20">
    <property type="entry name" value="Ribosomal protein L25, beta domain"/>
    <property type="match status" value="1"/>
</dbReference>
<dbReference type="Gene3D" id="2.40.240.10">
    <property type="entry name" value="Ribosomal Protein L25, Chain P"/>
    <property type="match status" value="1"/>
</dbReference>
<dbReference type="HAMAP" id="MF_01334">
    <property type="entry name" value="Ribosomal_bL25_CTC"/>
    <property type="match status" value="1"/>
</dbReference>
<dbReference type="InterPro" id="IPR020056">
    <property type="entry name" value="Rbsml_bL25/Gln-tRNA_synth_N"/>
</dbReference>
<dbReference type="InterPro" id="IPR011035">
    <property type="entry name" value="Ribosomal_bL25/Gln-tRNA_synth"/>
</dbReference>
<dbReference type="InterPro" id="IPR020057">
    <property type="entry name" value="Ribosomal_bL25_b-dom"/>
</dbReference>
<dbReference type="InterPro" id="IPR037121">
    <property type="entry name" value="Ribosomal_bL25_C"/>
</dbReference>
<dbReference type="InterPro" id="IPR001021">
    <property type="entry name" value="Ribosomal_bL25_long"/>
</dbReference>
<dbReference type="InterPro" id="IPR029751">
    <property type="entry name" value="Ribosomal_L25_dom"/>
</dbReference>
<dbReference type="InterPro" id="IPR020930">
    <property type="entry name" value="Ribosomal_uL5_bac-type"/>
</dbReference>
<dbReference type="NCBIfam" id="TIGR00731">
    <property type="entry name" value="bL25_bact_ctc"/>
    <property type="match status" value="1"/>
</dbReference>
<dbReference type="NCBIfam" id="NF004131">
    <property type="entry name" value="PRK05618.2-1"/>
    <property type="match status" value="1"/>
</dbReference>
<dbReference type="PANTHER" id="PTHR33284">
    <property type="entry name" value="RIBOSOMAL PROTEIN L25/GLN-TRNA SYNTHETASE, ANTI-CODON-BINDING DOMAIN-CONTAINING PROTEIN"/>
    <property type="match status" value="1"/>
</dbReference>
<dbReference type="PANTHER" id="PTHR33284:SF1">
    <property type="entry name" value="RIBOSOMAL PROTEIN L25_GLN-TRNA SYNTHETASE, ANTI-CODON-BINDING DOMAIN-CONTAINING PROTEIN"/>
    <property type="match status" value="1"/>
</dbReference>
<dbReference type="Pfam" id="PF01386">
    <property type="entry name" value="Ribosomal_L25p"/>
    <property type="match status" value="1"/>
</dbReference>
<dbReference type="Pfam" id="PF14693">
    <property type="entry name" value="Ribosomal_TL5_C"/>
    <property type="match status" value="1"/>
</dbReference>
<dbReference type="SUPFAM" id="SSF50715">
    <property type="entry name" value="Ribosomal protein L25-like"/>
    <property type="match status" value="1"/>
</dbReference>